<gene>
    <name evidence="1" type="primary">groEL</name>
    <name evidence="1" type="synonym">groL</name>
    <name type="ordered locus">LI0625</name>
</gene>
<name>CH60_LAWIP</name>
<reference key="1">
    <citation type="submission" date="2005-11" db="EMBL/GenBank/DDBJ databases">
        <title>The complete genome sequence of Lawsonia intracellularis: the causative agent of proliferative enteropathy.</title>
        <authorList>
            <person name="Kaur K."/>
            <person name="Zhang Q."/>
            <person name="Beckler D."/>
            <person name="Munir S."/>
            <person name="Li L."/>
            <person name="Kinsley K."/>
            <person name="Herron L."/>
            <person name="Peterson A."/>
            <person name="May B."/>
            <person name="Singh S."/>
            <person name="Gebhart C."/>
            <person name="Kapur V."/>
        </authorList>
    </citation>
    <scope>NUCLEOTIDE SEQUENCE [LARGE SCALE GENOMIC DNA]</scope>
    <source>
        <strain>PHE/MN1-00</strain>
    </source>
</reference>
<accession>Q1MQP8</accession>
<proteinExistence type="inferred from homology"/>
<comment type="function">
    <text evidence="1">Together with its co-chaperonin GroES, plays an essential role in assisting protein folding. The GroEL-GroES system forms a nano-cage that allows encapsulation of the non-native substrate proteins and provides a physical environment optimized to promote and accelerate protein folding.</text>
</comment>
<comment type="catalytic activity">
    <reaction evidence="1">
        <text>ATP + H2O + a folded polypeptide = ADP + phosphate + an unfolded polypeptide.</text>
        <dbReference type="EC" id="5.6.1.7"/>
    </reaction>
</comment>
<comment type="subunit">
    <text evidence="1">Forms a cylinder of 14 subunits composed of two heptameric rings stacked back-to-back. Interacts with the co-chaperonin GroES.</text>
</comment>
<comment type="subcellular location">
    <subcellularLocation>
        <location evidence="1">Cytoplasm</location>
    </subcellularLocation>
</comment>
<comment type="similarity">
    <text evidence="1">Belongs to the chaperonin (HSP60) family.</text>
</comment>
<evidence type="ECO:0000255" key="1">
    <source>
        <dbReference type="HAMAP-Rule" id="MF_00600"/>
    </source>
</evidence>
<sequence length="548" mass="58642">MASKEILFDAKAREKLSRGVDKLANAVKVTLGPKGRNVVIEKSFGSPVITKDGVSVAKEIELEDKFENMGAQMVKEVASKTSDIAGDGTTTATVLAQAIYREGVKLVAAGRNPMAIKRGIDKAVVAVTKELSDITKPTRDQKEIAQVGTISANSDTTIGNIIAEAMAKVGKEGVITVEEAKGLETTLDVVEGMKFDRGYLSPYFVTNPEKMVCELDNPYILCNEKKITSMKDMLPILEQVAKVNRPLLIIAEDVEGEALATLVVNKLRGALQVVAVKAPGFGERRKAMLEDIAILTGGEAIFEDRGIKLENVSLSSLGTAKRVVIDKENTTIVDGAGKSEDIKARVKQIRAQIEETSSDYDREKLQERLAKLVGGVAVIHVGAATETEMKEKKDRVEDALNATRAAVEEGIVPGGGTAFVRSIKVLDDIKPADDDELAGLNIIRRSLEEPLRQIAANAGYEGSIVVEKVREAKDGFGFNAASGEYEDLIKAGVIDPKKVTRIALQNAASVASLLLTTECAIAEKPEPKKDMPMPGGGMGGMGGMDGMY</sequence>
<dbReference type="EC" id="5.6.1.7" evidence="1"/>
<dbReference type="EMBL" id="AM180252">
    <property type="protein sequence ID" value="CAJ54679.1"/>
    <property type="molecule type" value="Genomic_DNA"/>
</dbReference>
<dbReference type="RefSeq" id="WP_011526708.1">
    <property type="nucleotide sequence ID" value="NC_008011.1"/>
</dbReference>
<dbReference type="SMR" id="Q1MQP8"/>
<dbReference type="STRING" id="363253.LI0625"/>
<dbReference type="KEGG" id="lip:LI0625"/>
<dbReference type="eggNOG" id="COG0459">
    <property type="taxonomic scope" value="Bacteria"/>
</dbReference>
<dbReference type="HOGENOM" id="CLU_016503_3_0_7"/>
<dbReference type="OrthoDB" id="9766614at2"/>
<dbReference type="Proteomes" id="UP000002430">
    <property type="component" value="Chromosome"/>
</dbReference>
<dbReference type="GO" id="GO:0005737">
    <property type="term" value="C:cytoplasm"/>
    <property type="evidence" value="ECO:0007669"/>
    <property type="project" value="UniProtKB-SubCell"/>
</dbReference>
<dbReference type="GO" id="GO:0005524">
    <property type="term" value="F:ATP binding"/>
    <property type="evidence" value="ECO:0007669"/>
    <property type="project" value="UniProtKB-UniRule"/>
</dbReference>
<dbReference type="GO" id="GO:0140662">
    <property type="term" value="F:ATP-dependent protein folding chaperone"/>
    <property type="evidence" value="ECO:0007669"/>
    <property type="project" value="InterPro"/>
</dbReference>
<dbReference type="GO" id="GO:0016853">
    <property type="term" value="F:isomerase activity"/>
    <property type="evidence" value="ECO:0007669"/>
    <property type="project" value="UniProtKB-KW"/>
</dbReference>
<dbReference type="GO" id="GO:0051082">
    <property type="term" value="F:unfolded protein binding"/>
    <property type="evidence" value="ECO:0007669"/>
    <property type="project" value="UniProtKB-UniRule"/>
</dbReference>
<dbReference type="GO" id="GO:0042026">
    <property type="term" value="P:protein refolding"/>
    <property type="evidence" value="ECO:0007669"/>
    <property type="project" value="UniProtKB-UniRule"/>
</dbReference>
<dbReference type="CDD" id="cd03344">
    <property type="entry name" value="GroEL"/>
    <property type="match status" value="1"/>
</dbReference>
<dbReference type="FunFam" id="3.50.7.10:FF:000001">
    <property type="entry name" value="60 kDa chaperonin"/>
    <property type="match status" value="1"/>
</dbReference>
<dbReference type="Gene3D" id="3.50.7.10">
    <property type="entry name" value="GroEL"/>
    <property type="match status" value="1"/>
</dbReference>
<dbReference type="Gene3D" id="1.10.560.10">
    <property type="entry name" value="GroEL-like equatorial domain"/>
    <property type="match status" value="1"/>
</dbReference>
<dbReference type="Gene3D" id="3.30.260.10">
    <property type="entry name" value="TCP-1-like chaperonin intermediate domain"/>
    <property type="match status" value="1"/>
</dbReference>
<dbReference type="HAMAP" id="MF_00600">
    <property type="entry name" value="CH60"/>
    <property type="match status" value="1"/>
</dbReference>
<dbReference type="InterPro" id="IPR018370">
    <property type="entry name" value="Chaperonin_Cpn60_CS"/>
</dbReference>
<dbReference type="InterPro" id="IPR001844">
    <property type="entry name" value="Cpn60/GroEL"/>
</dbReference>
<dbReference type="InterPro" id="IPR002423">
    <property type="entry name" value="Cpn60/GroEL/TCP-1"/>
</dbReference>
<dbReference type="InterPro" id="IPR027409">
    <property type="entry name" value="GroEL-like_apical_dom_sf"/>
</dbReference>
<dbReference type="InterPro" id="IPR027413">
    <property type="entry name" value="GROEL-like_equatorial_sf"/>
</dbReference>
<dbReference type="InterPro" id="IPR027410">
    <property type="entry name" value="TCP-1-like_intermed_sf"/>
</dbReference>
<dbReference type="NCBIfam" id="TIGR02348">
    <property type="entry name" value="GroEL"/>
    <property type="match status" value="1"/>
</dbReference>
<dbReference type="NCBIfam" id="NF000592">
    <property type="entry name" value="PRK00013.1"/>
    <property type="match status" value="1"/>
</dbReference>
<dbReference type="NCBIfam" id="NF009487">
    <property type="entry name" value="PRK12849.1"/>
    <property type="match status" value="1"/>
</dbReference>
<dbReference type="NCBIfam" id="NF009488">
    <property type="entry name" value="PRK12850.1"/>
    <property type="match status" value="1"/>
</dbReference>
<dbReference type="NCBIfam" id="NF009489">
    <property type="entry name" value="PRK12851.1"/>
    <property type="match status" value="1"/>
</dbReference>
<dbReference type="PANTHER" id="PTHR45633">
    <property type="entry name" value="60 KDA HEAT SHOCK PROTEIN, MITOCHONDRIAL"/>
    <property type="match status" value="1"/>
</dbReference>
<dbReference type="Pfam" id="PF00118">
    <property type="entry name" value="Cpn60_TCP1"/>
    <property type="match status" value="1"/>
</dbReference>
<dbReference type="PRINTS" id="PR00298">
    <property type="entry name" value="CHAPERONIN60"/>
</dbReference>
<dbReference type="SUPFAM" id="SSF52029">
    <property type="entry name" value="GroEL apical domain-like"/>
    <property type="match status" value="1"/>
</dbReference>
<dbReference type="SUPFAM" id="SSF48592">
    <property type="entry name" value="GroEL equatorial domain-like"/>
    <property type="match status" value="1"/>
</dbReference>
<dbReference type="SUPFAM" id="SSF54849">
    <property type="entry name" value="GroEL-intermediate domain like"/>
    <property type="match status" value="1"/>
</dbReference>
<dbReference type="PROSITE" id="PS00296">
    <property type="entry name" value="CHAPERONINS_CPN60"/>
    <property type="match status" value="1"/>
</dbReference>
<keyword id="KW-0067">ATP-binding</keyword>
<keyword id="KW-0143">Chaperone</keyword>
<keyword id="KW-0963">Cytoplasm</keyword>
<keyword id="KW-0413">Isomerase</keyword>
<keyword id="KW-0547">Nucleotide-binding</keyword>
<keyword id="KW-1185">Reference proteome</keyword>
<protein>
    <recommendedName>
        <fullName evidence="1">Chaperonin GroEL</fullName>
        <ecNumber evidence="1">5.6.1.7</ecNumber>
    </recommendedName>
    <alternativeName>
        <fullName evidence="1">60 kDa chaperonin</fullName>
    </alternativeName>
    <alternativeName>
        <fullName evidence="1">Chaperonin-60</fullName>
        <shortName evidence="1">Cpn60</shortName>
    </alternativeName>
</protein>
<feature type="chain" id="PRO_0000256923" description="Chaperonin GroEL">
    <location>
        <begin position="1"/>
        <end position="548"/>
    </location>
</feature>
<feature type="binding site" evidence="1">
    <location>
        <begin position="30"/>
        <end position="33"/>
    </location>
    <ligand>
        <name>ATP</name>
        <dbReference type="ChEBI" id="CHEBI:30616"/>
    </ligand>
</feature>
<feature type="binding site" evidence="1">
    <location>
        <position position="51"/>
    </location>
    <ligand>
        <name>ATP</name>
        <dbReference type="ChEBI" id="CHEBI:30616"/>
    </ligand>
</feature>
<feature type="binding site" evidence="1">
    <location>
        <begin position="87"/>
        <end position="91"/>
    </location>
    <ligand>
        <name>ATP</name>
        <dbReference type="ChEBI" id="CHEBI:30616"/>
    </ligand>
</feature>
<feature type="binding site" evidence="1">
    <location>
        <position position="415"/>
    </location>
    <ligand>
        <name>ATP</name>
        <dbReference type="ChEBI" id="CHEBI:30616"/>
    </ligand>
</feature>
<feature type="binding site" evidence="1">
    <location>
        <begin position="479"/>
        <end position="481"/>
    </location>
    <ligand>
        <name>ATP</name>
        <dbReference type="ChEBI" id="CHEBI:30616"/>
    </ligand>
</feature>
<feature type="binding site" evidence="1">
    <location>
        <position position="495"/>
    </location>
    <ligand>
        <name>ATP</name>
        <dbReference type="ChEBI" id="CHEBI:30616"/>
    </ligand>
</feature>
<organism>
    <name type="scientific">Lawsonia intracellularis (strain PHE/MN1-00)</name>
    <dbReference type="NCBI Taxonomy" id="363253"/>
    <lineage>
        <taxon>Bacteria</taxon>
        <taxon>Pseudomonadati</taxon>
        <taxon>Thermodesulfobacteriota</taxon>
        <taxon>Desulfovibrionia</taxon>
        <taxon>Desulfovibrionales</taxon>
        <taxon>Desulfovibrionaceae</taxon>
        <taxon>Lawsonia</taxon>
    </lineage>
</organism>